<name>GPMB_ECOLU</name>
<proteinExistence type="inferred from homology"/>
<reference key="1">
    <citation type="journal article" date="2009" name="PLoS Genet.">
        <title>Organised genome dynamics in the Escherichia coli species results in highly diverse adaptive paths.</title>
        <authorList>
            <person name="Touchon M."/>
            <person name="Hoede C."/>
            <person name="Tenaillon O."/>
            <person name="Barbe V."/>
            <person name="Baeriswyl S."/>
            <person name="Bidet P."/>
            <person name="Bingen E."/>
            <person name="Bonacorsi S."/>
            <person name="Bouchier C."/>
            <person name="Bouvet O."/>
            <person name="Calteau A."/>
            <person name="Chiapello H."/>
            <person name="Clermont O."/>
            <person name="Cruveiller S."/>
            <person name="Danchin A."/>
            <person name="Diard M."/>
            <person name="Dossat C."/>
            <person name="Karoui M.E."/>
            <person name="Frapy E."/>
            <person name="Garry L."/>
            <person name="Ghigo J.M."/>
            <person name="Gilles A.M."/>
            <person name="Johnson J."/>
            <person name="Le Bouguenec C."/>
            <person name="Lescat M."/>
            <person name="Mangenot S."/>
            <person name="Martinez-Jehanne V."/>
            <person name="Matic I."/>
            <person name="Nassif X."/>
            <person name="Oztas S."/>
            <person name="Petit M.A."/>
            <person name="Pichon C."/>
            <person name="Rouy Z."/>
            <person name="Ruf C.S."/>
            <person name="Schneider D."/>
            <person name="Tourret J."/>
            <person name="Vacherie B."/>
            <person name="Vallenet D."/>
            <person name="Medigue C."/>
            <person name="Rocha E.P.C."/>
            <person name="Denamur E."/>
        </authorList>
    </citation>
    <scope>NUCLEOTIDE SEQUENCE [LARGE SCALE GENOMIC DNA]</scope>
    <source>
        <strain>UMN026 / ExPEC</strain>
    </source>
</reference>
<organism>
    <name type="scientific">Escherichia coli O17:K52:H18 (strain UMN026 / ExPEC)</name>
    <dbReference type="NCBI Taxonomy" id="585056"/>
    <lineage>
        <taxon>Bacteria</taxon>
        <taxon>Pseudomonadati</taxon>
        <taxon>Pseudomonadota</taxon>
        <taxon>Gammaproteobacteria</taxon>
        <taxon>Enterobacterales</taxon>
        <taxon>Enterobacteriaceae</taxon>
        <taxon>Escherichia</taxon>
    </lineage>
</organism>
<keyword id="KW-0324">Glycolysis</keyword>
<keyword id="KW-0413">Isomerase</keyword>
<sequence length="215" mass="24065">MLQVYLVRHGETQWNAERRIQGQSDSPLTAKGEQQAMQVATRAKELGITHIISSDLGRTRRTAEIIAQACGCDIIFDSRLRELNMGVLEKRHIDSLTEEEENWRRQLVNGTVDGRIPEGESMQELSDRVNAALESCRDLPQGSRPLLVSHGIALGCLVSTILGLPAWAERRLRLRNCSISRVDYQESLWLASGWVVETAGDISHLDAPALDELQR</sequence>
<comment type="catalytic activity">
    <reaction evidence="1">
        <text>(2R)-2-phosphoglycerate = (2R)-3-phosphoglycerate</text>
        <dbReference type="Rhea" id="RHEA:15901"/>
        <dbReference type="ChEBI" id="CHEBI:58272"/>
        <dbReference type="ChEBI" id="CHEBI:58289"/>
    </reaction>
</comment>
<comment type="pathway">
    <text evidence="1">Carbohydrate degradation; glycolysis; pyruvate from D-glyceraldehyde 3-phosphate: step 3/5.</text>
</comment>
<comment type="similarity">
    <text evidence="1">Belongs to the phosphoglycerate mutase family. GpmB subfamily.</text>
</comment>
<dbReference type="EC" id="5.4.2.-" evidence="1"/>
<dbReference type="EMBL" id="CU928163">
    <property type="protein sequence ID" value="CAR16135.1"/>
    <property type="molecule type" value="Genomic_DNA"/>
</dbReference>
<dbReference type="RefSeq" id="WP_000942344.1">
    <property type="nucleotide sequence ID" value="NC_011751.1"/>
</dbReference>
<dbReference type="RefSeq" id="YP_002415599.1">
    <property type="nucleotide sequence ID" value="NC_011751.1"/>
</dbReference>
<dbReference type="SMR" id="B7NH70"/>
<dbReference type="STRING" id="585056.ECUMN_5026"/>
<dbReference type="GeneID" id="93777450"/>
<dbReference type="KEGG" id="eum:ECUMN_5026"/>
<dbReference type="PATRIC" id="fig|585056.7.peg.5191"/>
<dbReference type="HOGENOM" id="CLU_033323_9_5_6"/>
<dbReference type="UniPathway" id="UPA00109">
    <property type="reaction ID" value="UER00186"/>
</dbReference>
<dbReference type="Proteomes" id="UP000007097">
    <property type="component" value="Chromosome"/>
</dbReference>
<dbReference type="GO" id="GO:0005737">
    <property type="term" value="C:cytoplasm"/>
    <property type="evidence" value="ECO:0007669"/>
    <property type="project" value="TreeGrafter"/>
</dbReference>
<dbReference type="GO" id="GO:0016791">
    <property type="term" value="F:phosphatase activity"/>
    <property type="evidence" value="ECO:0007669"/>
    <property type="project" value="TreeGrafter"/>
</dbReference>
<dbReference type="GO" id="GO:0004619">
    <property type="term" value="F:phosphoglycerate mutase activity"/>
    <property type="evidence" value="ECO:0007669"/>
    <property type="project" value="UniProtKB-UniRule"/>
</dbReference>
<dbReference type="GO" id="GO:0006096">
    <property type="term" value="P:glycolytic process"/>
    <property type="evidence" value="ECO:0007669"/>
    <property type="project" value="UniProtKB-UniRule"/>
</dbReference>
<dbReference type="CDD" id="cd07067">
    <property type="entry name" value="HP_PGM_like"/>
    <property type="match status" value="1"/>
</dbReference>
<dbReference type="Gene3D" id="3.40.50.1240">
    <property type="entry name" value="Phosphoglycerate mutase-like"/>
    <property type="match status" value="1"/>
</dbReference>
<dbReference type="HAMAP" id="MF_01040">
    <property type="entry name" value="PGAM_GpmB"/>
    <property type="match status" value="1"/>
</dbReference>
<dbReference type="InterPro" id="IPR013078">
    <property type="entry name" value="His_Pase_superF_clade-1"/>
</dbReference>
<dbReference type="InterPro" id="IPR029033">
    <property type="entry name" value="His_PPase_superfam"/>
</dbReference>
<dbReference type="InterPro" id="IPR001345">
    <property type="entry name" value="PG/BPGM_mutase_AS"/>
</dbReference>
<dbReference type="InterPro" id="IPR050275">
    <property type="entry name" value="PGM_Phosphatase"/>
</dbReference>
<dbReference type="InterPro" id="IPR023086">
    <property type="entry name" value="Phosphoglycerate_mutase_GpmB"/>
</dbReference>
<dbReference type="NCBIfam" id="NF002901">
    <property type="entry name" value="PRK03482.1"/>
    <property type="match status" value="1"/>
</dbReference>
<dbReference type="PANTHER" id="PTHR48100">
    <property type="entry name" value="BROAD-SPECIFICITY PHOSPHATASE YOR283W-RELATED"/>
    <property type="match status" value="1"/>
</dbReference>
<dbReference type="PANTHER" id="PTHR48100:SF1">
    <property type="entry name" value="HISTIDINE PHOSPHATASE FAMILY PROTEIN-RELATED"/>
    <property type="match status" value="1"/>
</dbReference>
<dbReference type="Pfam" id="PF00300">
    <property type="entry name" value="His_Phos_1"/>
    <property type="match status" value="1"/>
</dbReference>
<dbReference type="SMART" id="SM00855">
    <property type="entry name" value="PGAM"/>
    <property type="match status" value="1"/>
</dbReference>
<dbReference type="SUPFAM" id="SSF53254">
    <property type="entry name" value="Phosphoglycerate mutase-like"/>
    <property type="match status" value="1"/>
</dbReference>
<dbReference type="PROSITE" id="PS00175">
    <property type="entry name" value="PG_MUTASE"/>
    <property type="match status" value="1"/>
</dbReference>
<protein>
    <recommendedName>
        <fullName evidence="1">Probable phosphoglycerate mutase GpmB</fullName>
        <ecNumber evidence="1">5.4.2.-</ecNumber>
    </recommendedName>
    <alternativeName>
        <fullName evidence="1">PGAM</fullName>
    </alternativeName>
    <alternativeName>
        <fullName evidence="1">Phosphoglyceromutase</fullName>
    </alternativeName>
</protein>
<evidence type="ECO:0000255" key="1">
    <source>
        <dbReference type="HAMAP-Rule" id="MF_01040"/>
    </source>
</evidence>
<gene>
    <name evidence="1" type="primary">gpmB</name>
    <name type="ordered locus">ECUMN_5026</name>
</gene>
<accession>B7NH70</accession>
<feature type="chain" id="PRO_1000136004" description="Probable phosphoglycerate mutase GpmB">
    <location>
        <begin position="1"/>
        <end position="215"/>
    </location>
</feature>
<feature type="active site" description="Tele-phosphohistidine intermediate" evidence="1">
    <location>
        <position position="9"/>
    </location>
</feature>
<feature type="active site" description="Proton donor/acceptor" evidence="1">
    <location>
        <position position="82"/>
    </location>
</feature>
<feature type="binding site" evidence="1">
    <location>
        <begin position="8"/>
        <end position="15"/>
    </location>
    <ligand>
        <name>substrate</name>
    </ligand>
</feature>
<feature type="binding site" evidence="1">
    <location>
        <begin position="21"/>
        <end position="22"/>
    </location>
    <ligand>
        <name>substrate</name>
    </ligand>
</feature>
<feature type="binding site" evidence="1">
    <location>
        <position position="58"/>
    </location>
    <ligand>
        <name>substrate</name>
    </ligand>
</feature>
<feature type="binding site" evidence="1">
    <location>
        <position position="60"/>
    </location>
    <ligand>
        <name>substrate</name>
    </ligand>
</feature>
<feature type="binding site" evidence="1">
    <location>
        <begin position="82"/>
        <end position="85"/>
    </location>
    <ligand>
        <name>substrate</name>
    </ligand>
</feature>
<feature type="binding site" evidence="1">
    <location>
        <begin position="104"/>
        <end position="105"/>
    </location>
    <ligand>
        <name>substrate</name>
    </ligand>
</feature>
<feature type="binding site" evidence="1">
    <location>
        <begin position="151"/>
        <end position="152"/>
    </location>
    <ligand>
        <name>substrate</name>
    </ligand>
</feature>
<feature type="site" description="Transition state stabilizer" evidence="1">
    <location>
        <position position="150"/>
    </location>
</feature>